<gene>
    <name evidence="1" type="primary">recR</name>
    <name type="ordered locus">NT01CX_0823</name>
</gene>
<evidence type="ECO:0000255" key="1">
    <source>
        <dbReference type="HAMAP-Rule" id="MF_00017"/>
    </source>
</evidence>
<evidence type="ECO:0000305" key="2"/>
<feature type="chain" id="PRO_0000322878" description="Recombination protein RecR">
    <location>
        <begin position="1"/>
        <end position="198"/>
    </location>
</feature>
<feature type="domain" description="Toprim" evidence="1">
    <location>
        <begin position="81"/>
        <end position="175"/>
    </location>
</feature>
<feature type="zinc finger region" description="C4-type" evidence="1">
    <location>
        <begin position="58"/>
        <end position="73"/>
    </location>
</feature>
<accession>A0Q3R3</accession>
<organism>
    <name type="scientific">Clostridium novyi (strain NT)</name>
    <dbReference type="NCBI Taxonomy" id="386415"/>
    <lineage>
        <taxon>Bacteria</taxon>
        <taxon>Bacillati</taxon>
        <taxon>Bacillota</taxon>
        <taxon>Clostridia</taxon>
        <taxon>Eubacteriales</taxon>
        <taxon>Clostridiaceae</taxon>
        <taxon>Clostridium</taxon>
    </lineage>
</organism>
<reference key="1">
    <citation type="journal article" date="2006" name="Nat. Biotechnol.">
        <title>The genome and transcriptomes of the anti-tumor agent Clostridium novyi-NT.</title>
        <authorList>
            <person name="Bettegowda C."/>
            <person name="Huang X."/>
            <person name="Lin J."/>
            <person name="Cheong I."/>
            <person name="Kohli M."/>
            <person name="Szabo S.A."/>
            <person name="Zhang X."/>
            <person name="Diaz L.A. Jr."/>
            <person name="Velculescu V.E."/>
            <person name="Parmigiani G."/>
            <person name="Kinzler K.W."/>
            <person name="Vogelstein B."/>
            <person name="Zhou S."/>
        </authorList>
    </citation>
    <scope>NUCLEOTIDE SEQUENCE [LARGE SCALE GENOMIC DNA]</scope>
    <source>
        <strain>NT</strain>
    </source>
</reference>
<dbReference type="EMBL" id="CP000382">
    <property type="protein sequence ID" value="ABK62658.1"/>
    <property type="status" value="ALT_INIT"/>
    <property type="molecule type" value="Genomic_DNA"/>
</dbReference>
<dbReference type="RefSeq" id="WP_039226842.1">
    <property type="nucleotide sequence ID" value="NC_008593.1"/>
</dbReference>
<dbReference type="SMR" id="A0Q3R3"/>
<dbReference type="STRING" id="386415.NT01CX_0823"/>
<dbReference type="KEGG" id="cno:NT01CX_0823"/>
<dbReference type="eggNOG" id="COG0353">
    <property type="taxonomic scope" value="Bacteria"/>
</dbReference>
<dbReference type="HOGENOM" id="CLU_060739_1_0_9"/>
<dbReference type="Proteomes" id="UP000008220">
    <property type="component" value="Chromosome"/>
</dbReference>
<dbReference type="GO" id="GO:0003677">
    <property type="term" value="F:DNA binding"/>
    <property type="evidence" value="ECO:0007669"/>
    <property type="project" value="UniProtKB-UniRule"/>
</dbReference>
<dbReference type="GO" id="GO:0008270">
    <property type="term" value="F:zinc ion binding"/>
    <property type="evidence" value="ECO:0007669"/>
    <property type="project" value="UniProtKB-KW"/>
</dbReference>
<dbReference type="GO" id="GO:0006310">
    <property type="term" value="P:DNA recombination"/>
    <property type="evidence" value="ECO:0007669"/>
    <property type="project" value="UniProtKB-UniRule"/>
</dbReference>
<dbReference type="GO" id="GO:0006281">
    <property type="term" value="P:DNA repair"/>
    <property type="evidence" value="ECO:0007669"/>
    <property type="project" value="UniProtKB-UniRule"/>
</dbReference>
<dbReference type="CDD" id="cd01025">
    <property type="entry name" value="TOPRIM_recR"/>
    <property type="match status" value="1"/>
</dbReference>
<dbReference type="Gene3D" id="3.30.60.80">
    <property type="match status" value="1"/>
</dbReference>
<dbReference type="Gene3D" id="3.40.1360.10">
    <property type="match status" value="1"/>
</dbReference>
<dbReference type="Gene3D" id="6.10.250.240">
    <property type="match status" value="1"/>
</dbReference>
<dbReference type="Gene3D" id="1.10.8.420">
    <property type="entry name" value="RecR Domain 1"/>
    <property type="match status" value="1"/>
</dbReference>
<dbReference type="HAMAP" id="MF_00017">
    <property type="entry name" value="RecR"/>
    <property type="match status" value="1"/>
</dbReference>
<dbReference type="InterPro" id="IPR000093">
    <property type="entry name" value="DNA_Rcmb_RecR"/>
</dbReference>
<dbReference type="InterPro" id="IPR023627">
    <property type="entry name" value="Rcmb_RecR"/>
</dbReference>
<dbReference type="InterPro" id="IPR015967">
    <property type="entry name" value="Rcmb_RecR_Znf"/>
</dbReference>
<dbReference type="InterPro" id="IPR006171">
    <property type="entry name" value="TOPRIM_dom"/>
</dbReference>
<dbReference type="InterPro" id="IPR034137">
    <property type="entry name" value="TOPRIM_RecR"/>
</dbReference>
<dbReference type="NCBIfam" id="TIGR00615">
    <property type="entry name" value="recR"/>
    <property type="match status" value="1"/>
</dbReference>
<dbReference type="PANTHER" id="PTHR30446">
    <property type="entry name" value="RECOMBINATION PROTEIN RECR"/>
    <property type="match status" value="1"/>
</dbReference>
<dbReference type="PANTHER" id="PTHR30446:SF0">
    <property type="entry name" value="RECOMBINATION PROTEIN RECR"/>
    <property type="match status" value="1"/>
</dbReference>
<dbReference type="Pfam" id="PF21175">
    <property type="entry name" value="RecR_C"/>
    <property type="match status" value="1"/>
</dbReference>
<dbReference type="Pfam" id="PF21176">
    <property type="entry name" value="RecR_HhH"/>
    <property type="match status" value="1"/>
</dbReference>
<dbReference type="Pfam" id="PF02132">
    <property type="entry name" value="RecR_ZnF"/>
    <property type="match status" value="1"/>
</dbReference>
<dbReference type="Pfam" id="PF13662">
    <property type="entry name" value="Toprim_4"/>
    <property type="match status" value="1"/>
</dbReference>
<dbReference type="SMART" id="SM00493">
    <property type="entry name" value="TOPRIM"/>
    <property type="match status" value="1"/>
</dbReference>
<dbReference type="SUPFAM" id="SSF111304">
    <property type="entry name" value="Recombination protein RecR"/>
    <property type="match status" value="1"/>
</dbReference>
<dbReference type="PROSITE" id="PS01300">
    <property type="entry name" value="RECR"/>
    <property type="match status" value="1"/>
</dbReference>
<dbReference type="PROSITE" id="PS50880">
    <property type="entry name" value="TOPRIM"/>
    <property type="match status" value="1"/>
</dbReference>
<comment type="function">
    <text evidence="1">May play a role in DNA repair. It seems to be involved in an RecBC-independent recombinational process of DNA repair. It may act with RecF and RecO.</text>
</comment>
<comment type="similarity">
    <text evidence="1">Belongs to the RecR family.</text>
</comment>
<comment type="sequence caution" evidence="2">
    <conflict type="erroneous initiation">
        <sequence resource="EMBL-CDS" id="ABK62658"/>
    </conflict>
</comment>
<keyword id="KW-0227">DNA damage</keyword>
<keyword id="KW-0233">DNA recombination</keyword>
<keyword id="KW-0234">DNA repair</keyword>
<keyword id="KW-0479">Metal-binding</keyword>
<keyword id="KW-1185">Reference proteome</keyword>
<keyword id="KW-0862">Zinc</keyword>
<keyword id="KW-0863">Zinc-finger</keyword>
<sequence length="198" mass="21813">MDFYPVAIEKLIEEFAKLPGIGYKTAQRLTLHVLNLPSDEVREFANALVKARGTIKYCSICGNYTDSDPCAICSNPNRDESIICVIEQPKDIMSLEKIREYNGTYHVLHGVISPMSGKGPEDINLKGLIRRINENVKEVIVATNPNVEGEATAMYISKILKPLGVKVTRIAHGVPVGGDLEYADEVTLSKALEGRVEL</sequence>
<proteinExistence type="inferred from homology"/>
<protein>
    <recommendedName>
        <fullName evidence="1">Recombination protein RecR</fullName>
    </recommendedName>
</protein>
<name>RECR_CLONN</name>